<keyword id="KW-0050">Antiport</keyword>
<keyword id="KW-0106">Calcium</keyword>
<keyword id="KW-0109">Calcium transport</keyword>
<keyword id="KW-0112">Calmodulin-binding</keyword>
<keyword id="KW-1003">Cell membrane</keyword>
<keyword id="KW-0325">Glycoprotein</keyword>
<keyword id="KW-0406">Ion transport</keyword>
<keyword id="KW-0472">Membrane</keyword>
<keyword id="KW-0479">Metal-binding</keyword>
<keyword id="KW-0597">Phosphoprotein</keyword>
<keyword id="KW-1185">Reference proteome</keyword>
<keyword id="KW-0677">Repeat</keyword>
<keyword id="KW-0732">Signal</keyword>
<keyword id="KW-0915">Sodium</keyword>
<keyword id="KW-0739">Sodium transport</keyword>
<keyword id="KW-0812">Transmembrane</keyword>
<keyword id="KW-1133">Transmembrane helix</keyword>
<keyword id="KW-0813">Transport</keyword>
<accession>P48767</accession>
<accession>P79174</accession>
<reference key="1">
    <citation type="journal article" date="1996" name="Ann. N. Y. Acad. Sci.">
        <title>The exchanger and cardiac hypertrophy.</title>
        <authorList>
            <person name="Menick D.R."/>
            <person name="Barnes K.V."/>
            <person name="Thacker U.F."/>
            <person name="Dawson M.M."/>
            <person name="McDermott D.E."/>
            <person name="Rozich J.D."/>
            <person name="Kent R.L."/>
            <person name="Cooper G."/>
        </authorList>
    </citation>
    <scope>NUCLEOTIDE SEQUENCE [MRNA]</scope>
    <scope>TISSUE SPECIFICITY</scope>
    <source>
        <tissue>Heart</tissue>
    </source>
</reference>
<reference key="2">
    <citation type="journal article" date="1997" name="J. Biol. Chem.">
        <title>Cloning of cardiac, kidney, and brain promoters of the feline ncx1 gene.</title>
        <authorList>
            <person name="Barnes K.V."/>
            <person name="Cheng G."/>
            <person name="Dawson M.M."/>
            <person name="Menick D.R."/>
        </authorList>
    </citation>
    <scope>NUCLEOTIDE SEQUENCE [GENOMIC DNA] OF 1-600</scope>
</reference>
<reference key="3">
    <citation type="journal article" date="2013" name="Mol. Aspects Med.">
        <title>The SLC8 gene family of sodium-calcium exchangers (NCX) - structure, function, and regulation in health and disease.</title>
        <authorList>
            <person name="Khananshvili D."/>
        </authorList>
    </citation>
    <scope>REVIEW</scope>
</reference>
<evidence type="ECO:0000250" key="1">
    <source>
        <dbReference type="UniProtKB" id="P23685"/>
    </source>
</evidence>
<evidence type="ECO:0000250" key="2">
    <source>
        <dbReference type="UniProtKB" id="P32418"/>
    </source>
</evidence>
<evidence type="ECO:0000250" key="3">
    <source>
        <dbReference type="UniProtKB" id="P70414"/>
    </source>
</evidence>
<evidence type="ECO:0000250" key="4">
    <source>
        <dbReference type="UniProtKB" id="Q01728"/>
    </source>
</evidence>
<evidence type="ECO:0000255" key="5"/>
<evidence type="ECO:0000269" key="6">
    <source>
    </source>
</evidence>
<evidence type="ECO:0000305" key="7"/>
<gene>
    <name type="primary">SLC8A1</name>
    <name type="synonym">NCX1</name>
</gene>
<protein>
    <recommendedName>
        <fullName>Sodium/calcium exchanger 1</fullName>
    </recommendedName>
    <alternativeName>
        <fullName>Na(+)/Ca(2+)-exchange protein 1</fullName>
    </alternativeName>
    <alternativeName>
        <fullName>Solute carrier family 8 member 1</fullName>
    </alternativeName>
</protein>
<dbReference type="EMBL" id="L35846">
    <property type="protein sequence ID" value="AAB41941.1"/>
    <property type="molecule type" value="mRNA"/>
</dbReference>
<dbReference type="EMBL" id="AH004917">
    <property type="protein sequence ID" value="AAB40148.1"/>
    <property type="molecule type" value="Genomic_DNA"/>
</dbReference>
<dbReference type="RefSeq" id="NP_001009848.1">
    <property type="nucleotide sequence ID" value="NM_001009848.1"/>
</dbReference>
<dbReference type="SMR" id="P48767"/>
<dbReference type="FunCoup" id="P48767">
    <property type="interactions" value="15"/>
</dbReference>
<dbReference type="STRING" id="9685.ENSFCAP00000041112"/>
<dbReference type="GlyCosmos" id="P48767">
    <property type="glycosylation" value="2 sites, No reported glycans"/>
</dbReference>
<dbReference type="PaxDb" id="9685-ENSFCAP00000006326"/>
<dbReference type="GeneID" id="493807"/>
<dbReference type="KEGG" id="fca:493807"/>
<dbReference type="CTD" id="6546"/>
<dbReference type="eggNOG" id="KOG1306">
    <property type="taxonomic scope" value="Eukaryota"/>
</dbReference>
<dbReference type="InParanoid" id="P48767"/>
<dbReference type="OrthoDB" id="418484at2759"/>
<dbReference type="Proteomes" id="UP000011712">
    <property type="component" value="Unplaced"/>
</dbReference>
<dbReference type="GO" id="GO:0030424">
    <property type="term" value="C:axon"/>
    <property type="evidence" value="ECO:0000318"/>
    <property type="project" value="GO_Central"/>
</dbReference>
<dbReference type="GO" id="GO:0005886">
    <property type="term" value="C:plasma membrane"/>
    <property type="evidence" value="ECO:0000250"/>
    <property type="project" value="UniProtKB"/>
</dbReference>
<dbReference type="GO" id="GO:0098794">
    <property type="term" value="C:postsynapse"/>
    <property type="evidence" value="ECO:0000318"/>
    <property type="project" value="GO_Central"/>
</dbReference>
<dbReference type="GO" id="GO:0042383">
    <property type="term" value="C:sarcolemma"/>
    <property type="evidence" value="ECO:0000318"/>
    <property type="project" value="GO_Central"/>
</dbReference>
<dbReference type="GO" id="GO:0005509">
    <property type="term" value="F:calcium ion binding"/>
    <property type="evidence" value="ECO:0000250"/>
    <property type="project" value="UniProtKB"/>
</dbReference>
<dbReference type="GO" id="GO:0005432">
    <property type="term" value="F:calcium:sodium antiporter activity"/>
    <property type="evidence" value="ECO:0000250"/>
    <property type="project" value="UniProtKB"/>
</dbReference>
<dbReference type="GO" id="GO:0005516">
    <property type="term" value="F:calmodulin binding"/>
    <property type="evidence" value="ECO:0007669"/>
    <property type="project" value="UniProtKB-KW"/>
</dbReference>
<dbReference type="GO" id="GO:0098703">
    <property type="term" value="P:calcium ion import across plasma membrane"/>
    <property type="evidence" value="ECO:0000318"/>
    <property type="project" value="GO_Central"/>
</dbReference>
<dbReference type="GO" id="GO:0070588">
    <property type="term" value="P:calcium ion transmembrane transport"/>
    <property type="evidence" value="ECO:0000250"/>
    <property type="project" value="UniProtKB"/>
</dbReference>
<dbReference type="GO" id="GO:0007154">
    <property type="term" value="P:cell communication"/>
    <property type="evidence" value="ECO:0007669"/>
    <property type="project" value="InterPro"/>
</dbReference>
<dbReference type="GO" id="GO:0035725">
    <property type="term" value="P:sodium ion transmembrane transport"/>
    <property type="evidence" value="ECO:0000250"/>
    <property type="project" value="UniProtKB"/>
</dbReference>
<dbReference type="FunFam" id="1.20.1420.30:FF:000001">
    <property type="entry name" value="sodium/calcium exchanger 1 isoform X1"/>
    <property type="match status" value="1"/>
</dbReference>
<dbReference type="FunFam" id="1.20.1420.30:FF:000003">
    <property type="entry name" value="sodium/calcium exchanger 1 isoform X1"/>
    <property type="match status" value="1"/>
</dbReference>
<dbReference type="FunFam" id="2.60.40.2030:FF:000001">
    <property type="entry name" value="sodium/calcium exchanger 1 isoform X1"/>
    <property type="match status" value="1"/>
</dbReference>
<dbReference type="Gene3D" id="2.60.40.2030">
    <property type="match status" value="2"/>
</dbReference>
<dbReference type="Gene3D" id="1.20.1420.30">
    <property type="entry name" value="NCX, central ion-binding region"/>
    <property type="match status" value="2"/>
</dbReference>
<dbReference type="InterPro" id="IPR051171">
    <property type="entry name" value="CaCA"/>
</dbReference>
<dbReference type="InterPro" id="IPR038081">
    <property type="entry name" value="CalX-like_sf"/>
</dbReference>
<dbReference type="InterPro" id="IPR003644">
    <property type="entry name" value="Calx_beta"/>
</dbReference>
<dbReference type="InterPro" id="IPR001623">
    <property type="entry name" value="DnaJ_domain"/>
</dbReference>
<dbReference type="InterPro" id="IPR004836">
    <property type="entry name" value="Na_Ca_Ex"/>
</dbReference>
<dbReference type="InterPro" id="IPR032452">
    <property type="entry name" value="Na_Ca_Ex_C-exten"/>
</dbReference>
<dbReference type="InterPro" id="IPR002987">
    <property type="entry name" value="NaCa_exhngr1"/>
</dbReference>
<dbReference type="InterPro" id="IPR004837">
    <property type="entry name" value="NaCa_Exmemb"/>
</dbReference>
<dbReference type="InterPro" id="IPR044880">
    <property type="entry name" value="NCX_ion-bd_dom_sf"/>
</dbReference>
<dbReference type="NCBIfam" id="TIGR00845">
    <property type="entry name" value="caca"/>
    <property type="match status" value="1"/>
</dbReference>
<dbReference type="PANTHER" id="PTHR11878">
    <property type="entry name" value="SODIUM/CALCIUM EXCHANGER"/>
    <property type="match status" value="1"/>
</dbReference>
<dbReference type="PANTHER" id="PTHR11878:SF6">
    <property type="entry name" value="SODIUM_CALCIUM EXCHANGER 1"/>
    <property type="match status" value="1"/>
</dbReference>
<dbReference type="Pfam" id="PF03160">
    <property type="entry name" value="Calx-beta"/>
    <property type="match status" value="1"/>
</dbReference>
<dbReference type="Pfam" id="PF01699">
    <property type="entry name" value="Na_Ca_ex"/>
    <property type="match status" value="2"/>
</dbReference>
<dbReference type="Pfam" id="PF16494">
    <property type="entry name" value="Na_Ca_ex_C"/>
    <property type="match status" value="1"/>
</dbReference>
<dbReference type="PRINTS" id="PR01259">
    <property type="entry name" value="NACAEXCHNGR"/>
</dbReference>
<dbReference type="PRINTS" id="PR01260">
    <property type="entry name" value="NACAEXCHNGR1"/>
</dbReference>
<dbReference type="SMART" id="SM00237">
    <property type="entry name" value="Calx_beta"/>
    <property type="match status" value="2"/>
</dbReference>
<dbReference type="SUPFAM" id="SSF141072">
    <property type="entry name" value="CalX-like"/>
    <property type="match status" value="2"/>
</dbReference>
<comment type="function">
    <text evidence="3">Mediates the exchange of one Ca(2+) ion against three to four Na(+) ions across the cell membrane, and thereby contributes to the regulation of cytoplasmic Ca(2+) levels and Ca(2+)-dependent cellular processes. Contributes to Ca(2+) transport during excitation-contraction coupling in muscle. In a first phase, voltage-gated channels mediate the rapid increase of cytoplasmic Ca(2+) levels due to release of Ca(2+) stores from the endoplasmic reticulum. SLC8A1 mediates the export of Ca(2+) from the cell during the next phase, so that cytoplasmic Ca(2+) levels rapidly return to baseline. Required for normal embryonic heart development and the onset of heart contractions.</text>
</comment>
<comment type="catalytic activity">
    <reaction evidence="2">
        <text>Ca(2+)(in) + 3 Na(+)(out) = Ca(2+)(out) + 3 Na(+)(in)</text>
        <dbReference type="Rhea" id="RHEA:69955"/>
        <dbReference type="ChEBI" id="CHEBI:29101"/>
        <dbReference type="ChEBI" id="CHEBI:29108"/>
    </reaction>
</comment>
<comment type="activity regulation">
    <text evidence="4">Activated by micromolar levels of Ca(2+).</text>
</comment>
<comment type="subcellular location">
    <subcellularLocation>
        <location evidence="3">Cell membrane</location>
        <topology evidence="3">Multi-pass membrane protein</topology>
    </subcellularLocation>
</comment>
<comment type="tissue specificity">
    <text evidence="6">Detected in heart (at protein level). Detected in heart.</text>
</comment>
<comment type="domain">
    <text evidence="1">The cytoplasmic Calx-beta domains bind the regulatory Ca(2+). The first Calx-beta domain can bind up to four Ca(2+) ions. The second domain can bind another two Ca(2+) ions that are essential for calcium-regulated ion exchange.</text>
</comment>
<comment type="similarity">
    <text evidence="7">Belongs to the Ca(2+):cation antiporter (CaCA) (TC 2.A.19) family. SLC8 subfamily.</text>
</comment>
<organism>
    <name type="scientific">Felis catus</name>
    <name type="common">Cat</name>
    <name type="synonym">Felis silvestris catus</name>
    <dbReference type="NCBI Taxonomy" id="9685"/>
    <lineage>
        <taxon>Eukaryota</taxon>
        <taxon>Metazoa</taxon>
        <taxon>Chordata</taxon>
        <taxon>Craniata</taxon>
        <taxon>Vertebrata</taxon>
        <taxon>Euteleostomi</taxon>
        <taxon>Mammalia</taxon>
        <taxon>Eutheria</taxon>
        <taxon>Laurasiatheria</taxon>
        <taxon>Carnivora</taxon>
        <taxon>Feliformia</taxon>
        <taxon>Felidae</taxon>
        <taxon>Felinae</taxon>
        <taxon>Felis</taxon>
    </lineage>
</organism>
<name>NAC1_FELCA</name>
<sequence>MLRLRLSPTFSVGFHLLAFVPLLFSHVDLISADTEMEGEGNETGECTGSYYCKKGVILPIWEPQDPSFGDKIARATVYFVAMVYMFLGVSIIADRFMSSIEVITSQEKEITIKKPNGETTKTTVRIWNETVSNLTLMALGSSAPEILLSVIEVCGHNFTAGDLGPSTIVGSAAFNMFIIIALCVYVVPDGETRKIKHLRVFFVTAAWSIFAYTWLYIILSVISPGVVEVWEGLLTFFFFPICVVFAWVADRRLLFYKYVYKRYRAGKQRGMIIEHEGDRPSSKTEIEMDGKVVNSHVDNFLDGALVLEVDERDQDDEEARREMARILKELKQKHPEKEIEQLIELANYQVLSQQQKSRAFYRIQATRLMTGAGNILKRHAADQARKAVSMHEVNTEVAENDPVSKIFFEQGTYQCLENCGTVALTILRRGGDLTNTVFVDFRTEDGTANAGSDYEFTEGTVVFKPGETQKEIRVGIIDDDIFEEDENFLVHLSNVKVSSEASEDGILEANHVSTLACLGSPSTATVTIFDDDHAGIFTFEEPVTHVSESIGIMEVKVLRTSGARGNVIVPYKTIEGTARGGGEDFEDTCGELEFQNDEIVKTISVKVIDDEEYEKNKTFFLEIGEPRLVEMSEKKALLLNELGGFTITGKYLYGQPVFRKVHAREHPIPSTVITIAEECDAKQPLTSKEEEERRIAEMGRPILGEHTKLEVIIEESYEFKSTVDKLIKKTNLALVVGTNSWREQFIEAITVSAGEDDDDDECGEEKLPSCFDYVMHFLTVFWKVLFAFVPPTEYWNGWACFIVSILMIGILTAFIGDLASHFGCTIGLKDSVTAVVFVALGTSVPDTFASKVAATQDQYADASIGNVTGSNAVNVFLGIGVAWSIAAIYHAANGEQFKVSPGTLAFSVTLFTIFAFINVGVLLYRRRPEIGGELGGPRTAKLLTSCLFVLLWLLYIFFSSLEAYCHIKGF</sequence>
<feature type="signal peptide" evidence="5">
    <location>
        <begin position="1"/>
        <end position="32"/>
    </location>
</feature>
<feature type="chain" id="PRO_0000019378" description="Sodium/calcium exchanger 1">
    <location>
        <begin position="33"/>
        <end position="970"/>
    </location>
</feature>
<feature type="topological domain" description="Extracellular" evidence="5">
    <location>
        <begin position="33"/>
        <end position="71"/>
    </location>
</feature>
<feature type="transmembrane region" description="Helical" evidence="5">
    <location>
        <begin position="72"/>
        <end position="92"/>
    </location>
</feature>
<feature type="topological domain" description="Cytoplasmic" evidence="5">
    <location>
        <begin position="93"/>
        <end position="133"/>
    </location>
</feature>
<feature type="transmembrane region" description="Helical" evidence="5">
    <location>
        <begin position="134"/>
        <end position="154"/>
    </location>
</feature>
<feature type="topological domain" description="Extracellular" evidence="5">
    <location>
        <begin position="155"/>
        <end position="167"/>
    </location>
</feature>
<feature type="transmembrane region" description="Helical" evidence="5">
    <location>
        <begin position="168"/>
        <end position="188"/>
    </location>
</feature>
<feature type="topological domain" description="Cytoplasmic" evidence="5">
    <location>
        <begin position="189"/>
        <end position="201"/>
    </location>
</feature>
<feature type="transmembrane region" description="Helical" evidence="5">
    <location>
        <begin position="202"/>
        <end position="222"/>
    </location>
</feature>
<feature type="topological domain" description="Extracellular" evidence="5">
    <location>
        <begin position="223"/>
        <end position="228"/>
    </location>
</feature>
<feature type="transmembrane region" description="Helical" evidence="5">
    <location>
        <begin position="229"/>
        <end position="249"/>
    </location>
</feature>
<feature type="topological domain" description="Cytoplasmic" evidence="5">
    <location>
        <begin position="250"/>
        <end position="797"/>
    </location>
</feature>
<feature type="transmembrane region" description="Helical" evidence="5">
    <location>
        <begin position="798"/>
        <end position="818"/>
    </location>
</feature>
<feature type="topological domain" description="Extracellular" evidence="5">
    <location>
        <begin position="819"/>
        <end position="821"/>
    </location>
</feature>
<feature type="transmembrane region" description="Helical" evidence="5">
    <location>
        <begin position="822"/>
        <end position="842"/>
    </location>
</feature>
<feature type="topological domain" description="Cytoplasmic" evidence="5">
    <location>
        <begin position="843"/>
        <end position="871"/>
    </location>
</feature>
<feature type="transmembrane region" description="Helical" evidence="5">
    <location>
        <begin position="872"/>
        <end position="892"/>
    </location>
</feature>
<feature type="topological domain" description="Extracellular" evidence="5">
    <location>
        <begin position="893"/>
        <end position="903"/>
    </location>
</feature>
<feature type="transmembrane region" description="Helical" evidence="5">
    <location>
        <begin position="904"/>
        <end position="924"/>
    </location>
</feature>
<feature type="topological domain" description="Cytoplasmic" evidence="5">
    <location>
        <begin position="925"/>
        <end position="941"/>
    </location>
</feature>
<feature type="transmembrane region" description="Helical" evidence="5">
    <location>
        <begin position="942"/>
        <end position="962"/>
    </location>
</feature>
<feature type="topological domain" description="Extracellular" evidence="5">
    <location>
        <begin position="963"/>
        <end position="970"/>
    </location>
</feature>
<feature type="repeat" description="Alpha-1">
    <location>
        <begin position="138"/>
        <end position="178"/>
    </location>
</feature>
<feature type="domain" description="Calx-beta 1">
    <location>
        <begin position="393"/>
        <end position="493"/>
    </location>
</feature>
<feature type="domain" description="Calx-beta 2">
    <location>
        <begin position="524"/>
        <end position="624"/>
    </location>
</feature>
<feature type="repeat" description="Alpha-2">
    <location>
        <begin position="839"/>
        <end position="875"/>
    </location>
</feature>
<feature type="region of interest" description="Putative calmodulin-binding region" evidence="1">
    <location>
        <begin position="251"/>
        <end position="270"/>
    </location>
</feature>
<feature type="binding site" evidence="1">
    <location>
        <position position="417"/>
    </location>
    <ligand>
        <name>Ca(2+)</name>
        <dbReference type="ChEBI" id="CHEBI:29108"/>
        <label>1</label>
    </ligand>
</feature>
<feature type="binding site" evidence="1">
    <location>
        <position position="417"/>
    </location>
    <ligand>
        <name>Ca(2+)</name>
        <dbReference type="ChEBI" id="CHEBI:29108"/>
        <label>2</label>
    </ligand>
</feature>
<feature type="binding site" evidence="1">
    <location>
        <position position="417"/>
    </location>
    <ligand>
        <name>Ca(2+)</name>
        <dbReference type="ChEBI" id="CHEBI:29108"/>
        <label>3</label>
    </ligand>
</feature>
<feature type="binding site" evidence="1">
    <location>
        <position position="453"/>
    </location>
    <ligand>
        <name>Ca(2+)</name>
        <dbReference type="ChEBI" id="CHEBI:29108"/>
        <label>1</label>
    </ligand>
</feature>
<feature type="binding site" evidence="1">
    <location>
        <position position="453"/>
    </location>
    <ligand>
        <name>Ca(2+)</name>
        <dbReference type="ChEBI" id="CHEBI:29108"/>
        <label>4</label>
    </ligand>
</feature>
<feature type="binding site" evidence="1">
    <location>
        <position position="478"/>
    </location>
    <ligand>
        <name>Ca(2+)</name>
        <dbReference type="ChEBI" id="CHEBI:29108"/>
        <label>2</label>
    </ligand>
</feature>
<feature type="binding site" evidence="1">
    <location>
        <position position="479"/>
    </location>
    <ligand>
        <name>Ca(2+)</name>
        <dbReference type="ChEBI" id="CHEBI:29108"/>
        <label>1</label>
    </ligand>
</feature>
<feature type="binding site" evidence="1">
    <location>
        <position position="479"/>
    </location>
    <ligand>
        <name>Ca(2+)</name>
        <dbReference type="ChEBI" id="CHEBI:29108"/>
        <label>2</label>
    </ligand>
</feature>
<feature type="binding site" evidence="1">
    <location>
        <position position="479"/>
    </location>
    <ligand>
        <name>Ca(2+)</name>
        <dbReference type="ChEBI" id="CHEBI:29108"/>
        <label>3</label>
    </ligand>
</feature>
<feature type="binding site" evidence="1">
    <location>
        <position position="479"/>
    </location>
    <ligand>
        <name>Ca(2+)</name>
        <dbReference type="ChEBI" id="CHEBI:29108"/>
        <label>4</label>
    </ligand>
</feature>
<feature type="binding site" evidence="1">
    <location>
        <position position="481"/>
    </location>
    <ligand>
        <name>Ca(2+)</name>
        <dbReference type="ChEBI" id="CHEBI:29108"/>
        <label>3</label>
    </ligand>
</feature>
<feature type="binding site" evidence="1">
    <location>
        <position position="483"/>
    </location>
    <ligand>
        <name>Ca(2+)</name>
        <dbReference type="ChEBI" id="CHEBI:29108"/>
        <label>1</label>
    </ligand>
</feature>
<feature type="binding site" evidence="1">
    <location>
        <position position="483"/>
    </location>
    <ligand>
        <name>Ca(2+)</name>
        <dbReference type="ChEBI" id="CHEBI:29108"/>
        <label>3</label>
    </ligand>
</feature>
<feature type="binding site" evidence="1">
    <location>
        <position position="483"/>
    </location>
    <ligand>
        <name>Ca(2+)</name>
        <dbReference type="ChEBI" id="CHEBI:29108"/>
        <label>4</label>
    </ligand>
</feature>
<feature type="binding site" evidence="1">
    <location>
        <position position="486"/>
    </location>
    <ligand>
        <name>Ca(2+)</name>
        <dbReference type="ChEBI" id="CHEBI:29108"/>
        <label>4</label>
    </ligand>
</feature>
<feature type="binding site" evidence="1">
    <location>
        <position position="530"/>
    </location>
    <ligand>
        <name>Ca(2+)</name>
        <dbReference type="ChEBI" id="CHEBI:29108"/>
        <label>3</label>
    </ligand>
</feature>
<feature type="binding site" evidence="1">
    <location>
        <position position="531"/>
    </location>
    <ligand>
        <name>Ca(2+)</name>
        <dbReference type="ChEBI" id="CHEBI:29108"/>
        <label>2</label>
    </ligand>
</feature>
<feature type="binding site" evidence="1">
    <location>
        <position position="532"/>
    </location>
    <ligand>
        <name>Ca(2+)</name>
        <dbReference type="ChEBI" id="CHEBI:29108"/>
        <label>2</label>
    </ligand>
</feature>
<feature type="binding site" evidence="1">
    <location>
        <position position="532"/>
    </location>
    <ligand>
        <name>Ca(2+)</name>
        <dbReference type="ChEBI" id="CHEBI:29108"/>
        <label>3</label>
    </ligand>
</feature>
<feature type="binding site" evidence="1">
    <location>
        <position position="548"/>
    </location>
    <ligand>
        <name>Ca(2+)</name>
        <dbReference type="ChEBI" id="CHEBI:29108"/>
        <label>5</label>
    </ligand>
</feature>
<feature type="binding site" evidence="1">
    <location>
        <position position="584"/>
    </location>
    <ligand>
        <name>Ca(2+)</name>
        <dbReference type="ChEBI" id="CHEBI:29108"/>
        <label>6</label>
    </ligand>
</feature>
<feature type="binding site" evidence="1">
    <location>
        <position position="610"/>
    </location>
    <ligand>
        <name>Ca(2+)</name>
        <dbReference type="ChEBI" id="CHEBI:29108"/>
        <label>5</label>
    </ligand>
</feature>
<feature type="binding site" evidence="1">
    <location>
        <position position="610"/>
    </location>
    <ligand>
        <name>Ca(2+)</name>
        <dbReference type="ChEBI" id="CHEBI:29108"/>
        <label>6</label>
    </ligand>
</feature>
<feature type="binding site" evidence="1">
    <location>
        <position position="611"/>
    </location>
    <ligand>
        <name>Ca(2+)</name>
        <dbReference type="ChEBI" id="CHEBI:29108"/>
        <label>6</label>
    </ligand>
</feature>
<feature type="binding site" evidence="1">
    <location>
        <position position="612"/>
    </location>
    <ligand>
        <name>Ca(2+)</name>
        <dbReference type="ChEBI" id="CHEBI:29108"/>
        <label>5</label>
    </ligand>
</feature>
<feature type="binding site" evidence="1">
    <location>
        <position position="612"/>
    </location>
    <ligand>
        <name>Ca(2+)</name>
        <dbReference type="ChEBI" id="CHEBI:29108"/>
        <label>6</label>
    </ligand>
</feature>
<feature type="binding site" evidence="1">
    <location>
        <position position="715"/>
    </location>
    <ligand>
        <name>Ca(2+)</name>
        <dbReference type="ChEBI" id="CHEBI:29108"/>
        <label>5</label>
    </ligand>
</feature>
<feature type="modified residue" description="Phosphoserine" evidence="3">
    <location>
        <position position="282"/>
    </location>
</feature>
<feature type="modified residue" description="Phosphoserine" evidence="3 5">
    <location>
        <position position="389"/>
    </location>
</feature>
<feature type="glycosylation site" description="N-linked (GlcNAc...) asparagine" evidence="5">
    <location>
        <position position="41"/>
    </location>
</feature>
<feature type="glycosylation site" description="N-linked (GlcNAc...) asparagine" evidence="5">
    <location>
        <position position="157"/>
    </location>
</feature>
<feature type="sequence conflict" description="In Ref. 2; AAB40148." evidence="7" ref="2">
    <original>P</original>
    <variation>A</variation>
    <location>
        <position position="21"/>
    </location>
</feature>
<feature type="sequence conflict" description="In Ref. 2; AAB40148." evidence="7" ref="2">
    <original>K</original>
    <variation>N</variation>
    <location>
        <position position="113"/>
    </location>
</feature>
<proteinExistence type="evidence at protein level"/>